<comment type="function">
    <text evidence="1">Probable transcriptional regulator that acts as a repressor of the gibberellin (GA) signaling pathway. Probably acts by participating in large multiprotein complexes that represses transcription of GA-inducible genes. Upon GA application, it is degraded by the proteasome, allowing the GA signaling pathway (By similarity).</text>
</comment>
<comment type="subcellular location">
    <subcellularLocation>
        <location evidence="1">Nucleus</location>
    </subcellularLocation>
</comment>
<comment type="domain">
    <text evidence="1">The DELLA motif is required for its GA-induced degradation.</text>
</comment>
<comment type="PTM">
    <text evidence="1">Phosphorylated.</text>
</comment>
<comment type="PTM">
    <text evidence="1">Ubiquitinated. Upon GA application it is ubiquitinated, leading to its subsequent degradation (By similarity).</text>
</comment>
<comment type="similarity">
    <text evidence="4">Belongs to the GRAS family. DELLA subfamily.</text>
</comment>
<comment type="sequence caution" evidence="4">
    <conflict type="frameshift">
        <sequence resource="EMBL-CDS" id="AAY28970"/>
    </conflict>
</comment>
<accession>Q84TQ7</accession>
<accession>Q4ZIN2</accession>
<gene>
    <name type="primary">GAI</name>
</gene>
<organism>
    <name type="scientific">Gossypium hirsutum</name>
    <name type="common">Upland cotton</name>
    <name type="synonym">Gossypium mexicanum</name>
    <dbReference type="NCBI Taxonomy" id="3635"/>
    <lineage>
        <taxon>Eukaryota</taxon>
        <taxon>Viridiplantae</taxon>
        <taxon>Streptophyta</taxon>
        <taxon>Embryophyta</taxon>
        <taxon>Tracheophyta</taxon>
        <taxon>Spermatophyta</taxon>
        <taxon>Magnoliopsida</taxon>
        <taxon>eudicotyledons</taxon>
        <taxon>Gunneridae</taxon>
        <taxon>Pentapetalae</taxon>
        <taxon>rosids</taxon>
        <taxon>malvids</taxon>
        <taxon>Malvales</taxon>
        <taxon>Malvaceae</taxon>
        <taxon>Malvoideae</taxon>
        <taxon>Gossypium</taxon>
    </lineage>
</organism>
<feature type="chain" id="PRO_0000132243" description="DELLA protein GAI">
    <location>
        <begin position="1"/>
        <end position="537"/>
    </location>
</feature>
<feature type="domain" description="GRAS" evidence="2">
    <location>
        <begin position="162"/>
        <end position="533"/>
    </location>
</feature>
<feature type="region of interest" description="Disordered" evidence="3">
    <location>
        <begin position="1"/>
        <end position="33"/>
    </location>
</feature>
<feature type="region of interest" description="Disordered" evidence="3">
    <location>
        <begin position="131"/>
        <end position="157"/>
    </location>
</feature>
<feature type="region of interest" description="Leucine repeat I (LRI)" evidence="2">
    <location>
        <begin position="169"/>
        <end position="223"/>
    </location>
</feature>
<feature type="region of interest" description="VHIID" evidence="2">
    <location>
        <begin position="241"/>
        <end position="306"/>
    </location>
</feature>
<feature type="region of interest" description="Leucine repeat II (LRII)" evidence="2">
    <location>
        <begin position="320"/>
        <end position="352"/>
    </location>
</feature>
<feature type="region of interest" description="PFYRE" evidence="2">
    <location>
        <begin position="364"/>
        <end position="454"/>
    </location>
</feature>
<feature type="region of interest" description="SAW" evidence="2">
    <location>
        <begin position="457"/>
        <end position="533"/>
    </location>
</feature>
<feature type="short sequence motif" description="DELLA motif">
    <location>
        <begin position="37"/>
        <end position="41"/>
    </location>
</feature>
<feature type="short sequence motif" description="VHIID" evidence="2">
    <location>
        <begin position="272"/>
        <end position="276"/>
    </location>
</feature>
<feature type="short sequence motif" description="LXXLL motif" evidence="2">
    <location>
        <begin position="372"/>
        <end position="376"/>
    </location>
</feature>
<feature type="compositionally biased region" description="Low complexity" evidence="3">
    <location>
        <begin position="9"/>
        <end position="20"/>
    </location>
</feature>
<feature type="compositionally biased region" description="Low complexity" evidence="3">
    <location>
        <begin position="147"/>
        <end position="156"/>
    </location>
</feature>
<feature type="sequence conflict" description="In Ref. 2; AAY28970." evidence="4" ref="2">
    <original>A</original>
    <variation>T</variation>
    <location>
        <position position="125"/>
    </location>
</feature>
<feature type="sequence conflict" description="In Ref. 2; AAY28970." evidence="4" ref="2">
    <original>I</original>
    <variation>N</variation>
    <location>
        <position position="138"/>
    </location>
</feature>
<feature type="sequence conflict" description="In Ref. 2; AAY28970." evidence="4" ref="2">
    <original>A</original>
    <variation>T</variation>
    <location>
        <position position="167"/>
    </location>
</feature>
<feature type="sequence conflict" description="In Ref. 2; AAY28970." evidence="4" ref="2">
    <original>IP</original>
    <variation>MH</variation>
    <location>
        <begin position="242"/>
        <end position="243"/>
    </location>
</feature>
<feature type="sequence conflict" description="In Ref. 2; AAY28970." evidence="4" ref="2">
    <original>A</original>
    <variation>T</variation>
    <location>
        <position position="265"/>
    </location>
</feature>
<feature type="sequence conflict" description="In Ref. 2; AAY28970." evidence="4" ref="2">
    <original>S</original>
    <variation>N</variation>
    <location>
        <position position="270"/>
    </location>
</feature>
<feature type="sequence conflict" description="In Ref. 2; AAY28970." evidence="4" ref="2">
    <original>N</original>
    <variation>D</variation>
    <location>
        <position position="314"/>
    </location>
</feature>
<feature type="sequence conflict" description="In Ref. 2; AAY28970." evidence="4" ref="2">
    <original>Q</original>
    <variation>E</variation>
    <location>
        <position position="327"/>
    </location>
</feature>
<feature type="sequence conflict" description="In Ref. 2; AAY28970." evidence="4" ref="2">
    <original>R</original>
    <variation>P</variation>
    <location>
        <position position="339"/>
    </location>
</feature>
<feature type="sequence conflict" description="In Ref. 2; AAY28970." evidence="4" ref="2">
    <original>A</original>
    <variation>P</variation>
    <location>
        <position position="437"/>
    </location>
</feature>
<feature type="sequence conflict" description="In Ref. 2; AAY28970." evidence="4" ref="2">
    <original>V</original>
    <variation>F</variation>
    <location>
        <position position="482"/>
    </location>
</feature>
<evidence type="ECO:0000250" key="1"/>
<evidence type="ECO:0000255" key="2">
    <source>
        <dbReference type="PROSITE-ProRule" id="PRU01191"/>
    </source>
</evidence>
<evidence type="ECO:0000256" key="3">
    <source>
        <dbReference type="SAM" id="MobiDB-lite"/>
    </source>
</evidence>
<evidence type="ECO:0000305" key="4"/>
<dbReference type="EMBL" id="AY208992">
    <property type="protein sequence ID" value="AAO62757.1"/>
    <property type="molecule type" value="mRNA"/>
</dbReference>
<dbReference type="EMBL" id="DQ006269">
    <property type="protein sequence ID" value="AAY28970.1"/>
    <property type="status" value="ALT_FRAME"/>
    <property type="molecule type" value="Genomic_DNA"/>
</dbReference>
<dbReference type="SMR" id="Q84TQ7"/>
<dbReference type="STRING" id="3635.Q84TQ7"/>
<dbReference type="PaxDb" id="3635-Q84TQ7"/>
<dbReference type="Proteomes" id="UP000189702">
    <property type="component" value="Unplaced"/>
</dbReference>
<dbReference type="GO" id="GO:0005634">
    <property type="term" value="C:nucleus"/>
    <property type="evidence" value="ECO:0000314"/>
    <property type="project" value="AgBase"/>
</dbReference>
<dbReference type="GO" id="GO:0003700">
    <property type="term" value="F:DNA-binding transcription factor activity"/>
    <property type="evidence" value="ECO:0000318"/>
    <property type="project" value="GO_Central"/>
</dbReference>
<dbReference type="GO" id="GO:0043565">
    <property type="term" value="F:sequence-specific DNA binding"/>
    <property type="evidence" value="ECO:0000318"/>
    <property type="project" value="GO_Central"/>
</dbReference>
<dbReference type="GO" id="GO:0009740">
    <property type="term" value="P:gibberellic acid mediated signaling pathway"/>
    <property type="evidence" value="ECO:0000314"/>
    <property type="project" value="AgBase"/>
</dbReference>
<dbReference type="GO" id="GO:0042538">
    <property type="term" value="P:hyperosmotic salinity response"/>
    <property type="evidence" value="ECO:0000318"/>
    <property type="project" value="GO_Central"/>
</dbReference>
<dbReference type="GO" id="GO:0009867">
    <property type="term" value="P:jasmonic acid mediated signaling pathway"/>
    <property type="evidence" value="ECO:0000318"/>
    <property type="project" value="GO_Central"/>
</dbReference>
<dbReference type="GO" id="GO:0009938">
    <property type="term" value="P:negative regulation of gibberellic acid mediated signaling pathway"/>
    <property type="evidence" value="ECO:0000318"/>
    <property type="project" value="GO_Central"/>
</dbReference>
<dbReference type="GO" id="GO:0010187">
    <property type="term" value="P:negative regulation of seed germination"/>
    <property type="evidence" value="ECO:0000318"/>
    <property type="project" value="GO_Central"/>
</dbReference>
<dbReference type="GO" id="GO:2000273">
    <property type="term" value="P:positive regulation of signaling receptor activity"/>
    <property type="evidence" value="ECO:0000314"/>
    <property type="project" value="AgBase"/>
</dbReference>
<dbReference type="GO" id="GO:0006355">
    <property type="term" value="P:regulation of DNA-templated transcription"/>
    <property type="evidence" value="ECO:0000314"/>
    <property type="project" value="AgBase"/>
</dbReference>
<dbReference type="GO" id="GO:2000377">
    <property type="term" value="P:regulation of reactive oxygen species metabolic process"/>
    <property type="evidence" value="ECO:0000318"/>
    <property type="project" value="GO_Central"/>
</dbReference>
<dbReference type="GO" id="GO:2000033">
    <property type="term" value="P:regulation of seed dormancy process"/>
    <property type="evidence" value="ECO:0000318"/>
    <property type="project" value="GO_Central"/>
</dbReference>
<dbReference type="GO" id="GO:0009737">
    <property type="term" value="P:response to abscisic acid"/>
    <property type="evidence" value="ECO:0000318"/>
    <property type="project" value="GO_Central"/>
</dbReference>
<dbReference type="GO" id="GO:0009723">
    <property type="term" value="P:response to ethylene"/>
    <property type="evidence" value="ECO:0000318"/>
    <property type="project" value="GO_Central"/>
</dbReference>
<dbReference type="GO" id="GO:0009739">
    <property type="term" value="P:response to gibberellin"/>
    <property type="evidence" value="ECO:0000314"/>
    <property type="project" value="AgBase"/>
</dbReference>
<dbReference type="GO" id="GO:0009863">
    <property type="term" value="P:salicylic acid mediated signaling pathway"/>
    <property type="evidence" value="ECO:0000318"/>
    <property type="project" value="GO_Central"/>
</dbReference>
<dbReference type="GO" id="GO:0090378">
    <property type="term" value="P:seed trichome elongation"/>
    <property type="evidence" value="ECO:0000314"/>
    <property type="project" value="AgBase"/>
</dbReference>
<dbReference type="FunFam" id="1.10.10.1290:FF:000001">
    <property type="entry name" value="DELLA protein GAI"/>
    <property type="match status" value="1"/>
</dbReference>
<dbReference type="Gene3D" id="1.10.10.1290">
    <property type="entry name" value="Transcriptional regulator DELLA, N-terminal domain"/>
    <property type="match status" value="1"/>
</dbReference>
<dbReference type="InterPro" id="IPR038088">
    <property type="entry name" value="DELLA_N_sf"/>
</dbReference>
<dbReference type="InterPro" id="IPR021914">
    <property type="entry name" value="TF_DELLA_N"/>
</dbReference>
<dbReference type="InterPro" id="IPR005202">
    <property type="entry name" value="TF_GRAS"/>
</dbReference>
<dbReference type="PANTHER" id="PTHR31636">
    <property type="entry name" value="OSJNBA0084A10.13 PROTEIN-RELATED"/>
    <property type="match status" value="1"/>
</dbReference>
<dbReference type="Pfam" id="PF12041">
    <property type="entry name" value="DELLA"/>
    <property type="match status" value="1"/>
</dbReference>
<dbReference type="Pfam" id="PF03514">
    <property type="entry name" value="GRAS"/>
    <property type="match status" value="1"/>
</dbReference>
<dbReference type="SMART" id="SM01129">
    <property type="entry name" value="DELLA"/>
    <property type="match status" value="1"/>
</dbReference>
<dbReference type="PROSITE" id="PS50985">
    <property type="entry name" value="GRAS"/>
    <property type="match status" value="1"/>
</dbReference>
<keyword id="KW-0939">Gibberellin signaling pathway</keyword>
<keyword id="KW-0539">Nucleus</keyword>
<keyword id="KW-0597">Phosphoprotein</keyword>
<keyword id="KW-1185">Reference proteome</keyword>
<keyword id="KW-0678">Repressor</keyword>
<keyword id="KW-0804">Transcription</keyword>
<keyword id="KW-0805">Transcription regulation</keyword>
<keyword id="KW-0832">Ubl conjugation</keyword>
<reference key="1">
    <citation type="submission" date="2003-01" db="EMBL/GenBank/DDBJ databases">
        <title>Molecular cloning and expression analysis of a gene (GhGAI) from cotton (Gossypium hirsutum L.).</title>
        <authorList>
            <person name="Luo M."/>
            <person name="Xiao Y."/>
            <person name="Hou L."/>
            <person name="Luo X."/>
            <person name="Li D."/>
            <person name="Zhang Z."/>
            <person name="Pei Y."/>
        </authorList>
    </citation>
    <scope>NUCLEOTIDE SEQUENCE [MRNA]</scope>
    <source>
        <tissue>Fiber</tissue>
    </source>
</reference>
<reference key="2">
    <citation type="submission" date="2005-04" db="EMBL/GenBank/DDBJ databases">
        <authorList>
            <person name="Liao W.B."/>
            <person name="Cui B.M."/>
            <person name="Wei H.B."/>
            <person name="Yu X.L."/>
            <person name="Li J.H."/>
            <person name="Peng M."/>
        </authorList>
    </citation>
    <scope>NUCLEOTIDE SEQUENCE [GENOMIC DNA]</scope>
</reference>
<protein>
    <recommendedName>
        <fullName>DELLA protein GAI</fullName>
    </recommendedName>
    <alternativeName>
        <fullName>GhGAI</fullName>
    </alternativeName>
    <alternativeName>
        <fullName>Gibberellic acid-insensitive mutant protein</fullName>
    </alternativeName>
</protein>
<proteinExistence type="evidence at transcript level"/>
<sequence length="537" mass="58902">MKRDHQEISGSGSNPAESSSIKGKLWEEDPDAGGMDDELLAVLGYKVRSSDMADVAQKLEMLEKVMGTAQEDGISQLGDTVHFNPSDLSGWVQNLLIEFNGSTTTPDPNFNDDSEYDLRAIPGVAAYPPVKSDPGLEITRKRAKTESSSSSSSTTTRPVVLIDSQEAGVRLVHTLMACAEAVQQDNLKLADALVKHIGLLASSQTGAMRKVATYFAEALARRIYRIFPPDSLDPSYNDKLQIPFYETCPYLKFAHFTANQAILEAFSMASRVHVIDFGLKQGMQWPALMQALALRPGGPPAFRLTGIGPPQPDNTDALQQVGWKLAQLAERIGIEFEFRGFVANSLADLEPEMLDIRPPEIEVVAVNAVFELHPLLARPGGIEKVVSSIKAMKPKIVTVVEQEANHNGPVFLDRFTEALHYYSTLFDSLEGSGVAPASQDLAMSELYLGRQICNVVACEGMDRVERHEPLTQWRTRMETAGVSPVHLGSNAYKQASMLLALFASGDGYRVEENNGCLMLGWHTRPLIAHLGLATRWY</sequence>
<name>GAI_GOSHI</name>